<gene>
    <name type="primary">OR4D1</name>
    <name type="synonym">OR4D3</name>
</gene>
<accession>Q15615</accession>
<accession>B2RN14</accession>
<accession>Q8NGB1</accession>
<accession>Q96R76</accession>
<comment type="function">
    <text evidence="5">Odorant receptor.</text>
</comment>
<comment type="subcellular location">
    <subcellularLocation>
        <location>Cell membrane</location>
        <topology>Multi-pass membrane protein</topology>
    </subcellularLocation>
</comment>
<comment type="similarity">
    <text evidence="2">Belongs to the G-protein coupled receptor 1 family.</text>
</comment>
<comment type="online information" name="Human Olfactory Receptor Data Exploratorium (HORDE)">
    <link uri="http://genome.weizmann.ac.il/horde/card/index/symbol:OR4D1"/>
</comment>
<protein>
    <recommendedName>
        <fullName>Olfactory receptor 4D1</fullName>
    </recommendedName>
    <alternativeName>
        <fullName>Olfactory receptor 4D3</fullName>
    </alternativeName>
    <alternativeName>
        <fullName>Olfactory receptor TPCR16</fullName>
    </alternativeName>
</protein>
<evidence type="ECO:0000255" key="1"/>
<evidence type="ECO:0000255" key="2">
    <source>
        <dbReference type="PROSITE-ProRule" id="PRU00521"/>
    </source>
</evidence>
<evidence type="ECO:0000269" key="3">
    <source>
    </source>
</evidence>
<evidence type="ECO:0000269" key="4">
    <source>
    </source>
</evidence>
<evidence type="ECO:0000305" key="5"/>
<keyword id="KW-1003">Cell membrane</keyword>
<keyword id="KW-1015">Disulfide bond</keyword>
<keyword id="KW-0297">G-protein coupled receptor</keyword>
<keyword id="KW-0325">Glycoprotein</keyword>
<keyword id="KW-0472">Membrane</keyword>
<keyword id="KW-0552">Olfaction</keyword>
<keyword id="KW-0675">Receptor</keyword>
<keyword id="KW-1185">Reference proteome</keyword>
<keyword id="KW-0716">Sensory transduction</keyword>
<keyword id="KW-0807">Transducer</keyword>
<keyword id="KW-0812">Transmembrane</keyword>
<keyword id="KW-1133">Transmembrane helix</keyword>
<sequence>MEPQNTTQVSMFVLLGFSQTQELQKFLFLLFLLVYVTTIVGNLLIMVTVTFDCRLHTPMYFLLRNLALIDLCYSTVTSPKMLVDFLHETKTISYQGCMAQIFFFHLLGGGTVFFLSVMAYDRYIAISQPLRYVTIMNTQLCVGLVVAAWVGGFVHSIVQLALILPLPFCGPNILDNFYCDVPQVLRLACTDTSLLEFLMISNSGLLVIIWFLLLLISYTVILVMLRSHSGKARRKAASTCTTHIIVVSMIFIPCIYIYTWPFTPFLMDKAVSISYTVMTPMLNPMIYTLRNQDMKAAMRRLGKCLVICRE</sequence>
<proteinExistence type="evidence at transcript level"/>
<feature type="chain" id="PRO_0000150537" description="Olfactory receptor 4D1">
    <location>
        <begin position="1"/>
        <end position="310"/>
    </location>
</feature>
<feature type="topological domain" description="Extracellular" evidence="1">
    <location>
        <begin position="1"/>
        <end position="25"/>
    </location>
</feature>
<feature type="transmembrane region" description="Helical; Name=1" evidence="1">
    <location>
        <begin position="26"/>
        <end position="49"/>
    </location>
</feature>
<feature type="topological domain" description="Cytoplasmic" evidence="1">
    <location>
        <begin position="50"/>
        <end position="57"/>
    </location>
</feature>
<feature type="transmembrane region" description="Helical; Name=2" evidence="1">
    <location>
        <begin position="58"/>
        <end position="79"/>
    </location>
</feature>
<feature type="topological domain" description="Extracellular" evidence="1">
    <location>
        <begin position="80"/>
        <end position="100"/>
    </location>
</feature>
<feature type="transmembrane region" description="Helical; Name=3" evidence="1">
    <location>
        <begin position="101"/>
        <end position="120"/>
    </location>
</feature>
<feature type="topological domain" description="Cytoplasmic" evidence="1">
    <location>
        <begin position="121"/>
        <end position="139"/>
    </location>
</feature>
<feature type="transmembrane region" description="Helical; Name=4" evidence="1">
    <location>
        <begin position="140"/>
        <end position="158"/>
    </location>
</feature>
<feature type="topological domain" description="Extracellular" evidence="1">
    <location>
        <begin position="159"/>
        <end position="195"/>
    </location>
</feature>
<feature type="transmembrane region" description="Helical; Name=5" evidence="1">
    <location>
        <begin position="196"/>
        <end position="219"/>
    </location>
</feature>
<feature type="topological domain" description="Cytoplasmic" evidence="1">
    <location>
        <begin position="220"/>
        <end position="235"/>
    </location>
</feature>
<feature type="transmembrane region" description="Helical; Name=6" evidence="1">
    <location>
        <begin position="236"/>
        <end position="258"/>
    </location>
</feature>
<feature type="topological domain" description="Extracellular" evidence="1">
    <location>
        <begin position="259"/>
        <end position="269"/>
    </location>
</feature>
<feature type="transmembrane region" description="Helical; Name=7" evidence="1">
    <location>
        <begin position="270"/>
        <end position="289"/>
    </location>
</feature>
<feature type="topological domain" description="Cytoplasmic" evidence="1">
    <location>
        <begin position="290"/>
        <end position="310"/>
    </location>
</feature>
<feature type="glycosylation site" description="N-linked (GlcNAc...) asparagine" evidence="1">
    <location>
        <position position="5"/>
    </location>
</feature>
<feature type="disulfide bond" evidence="2">
    <location>
        <begin position="97"/>
        <end position="189"/>
    </location>
</feature>
<feature type="sequence variant" id="VAR_057546" description="In dbSNP:rs12602205.">
    <original>R</original>
    <variation>Q</variation>
    <location>
        <position position="54"/>
    </location>
</feature>
<feature type="sequence variant" id="VAR_060479" description="In dbSNP:rs7218964." evidence="3 4">
    <original>L</original>
    <variation>I</variation>
    <location>
        <position position="174"/>
    </location>
</feature>
<feature type="sequence conflict" description="In Ref. 2; AAK95052 and 3; CAA61817." evidence="5" ref="2 3">
    <original>G</original>
    <variation>D</variation>
    <location>
        <position position="170"/>
    </location>
</feature>
<feature type="sequence conflict" description="In Ref. 2; AAK95052 and 3; CAA61817." evidence="5" ref="2 3">
    <original>S</original>
    <variation>F</variation>
    <location>
        <position position="201"/>
    </location>
</feature>
<dbReference type="EMBL" id="AB065913">
    <property type="protein sequence ID" value="BAC06128.1"/>
    <property type="molecule type" value="Genomic_DNA"/>
</dbReference>
<dbReference type="EMBL" id="AC005962">
    <property type="status" value="NOT_ANNOTATED_CDS"/>
    <property type="molecule type" value="Genomic_DNA"/>
</dbReference>
<dbReference type="EMBL" id="CH471109">
    <property type="protein sequence ID" value="EAW94482.1"/>
    <property type="molecule type" value="Genomic_DNA"/>
</dbReference>
<dbReference type="EMBL" id="BC136589">
    <property type="protein sequence ID" value="AAI36590.1"/>
    <property type="molecule type" value="mRNA"/>
</dbReference>
<dbReference type="EMBL" id="BC136595">
    <property type="protein sequence ID" value="AAI36596.1"/>
    <property type="molecule type" value="mRNA"/>
</dbReference>
<dbReference type="EMBL" id="AF399567">
    <property type="protein sequence ID" value="AAK95052.1"/>
    <property type="molecule type" value="Genomic_DNA"/>
</dbReference>
<dbReference type="EMBL" id="X89670">
    <property type="protein sequence ID" value="CAA61817.1"/>
    <property type="molecule type" value="mRNA"/>
</dbReference>
<dbReference type="CCDS" id="CCDS42365.1"/>
<dbReference type="PIR" id="S58015">
    <property type="entry name" value="S58015"/>
</dbReference>
<dbReference type="RefSeq" id="NP_001373024.1">
    <property type="nucleotide sequence ID" value="NM_001386095.1"/>
</dbReference>
<dbReference type="RefSeq" id="NP_036506.1">
    <property type="nucleotide sequence ID" value="NM_012374.2"/>
</dbReference>
<dbReference type="SMR" id="Q15615"/>
<dbReference type="BioGRID" id="117790">
    <property type="interactions" value="1"/>
</dbReference>
<dbReference type="FunCoup" id="Q15615">
    <property type="interactions" value="418"/>
</dbReference>
<dbReference type="STRING" id="9606.ENSP00000493234"/>
<dbReference type="GlyCosmos" id="Q15615">
    <property type="glycosylation" value="1 site, No reported glycans"/>
</dbReference>
<dbReference type="GlyGen" id="Q15615">
    <property type="glycosylation" value="1 site"/>
</dbReference>
<dbReference type="iPTMnet" id="Q15615"/>
<dbReference type="PhosphoSitePlus" id="Q15615"/>
<dbReference type="BioMuta" id="OR4D1"/>
<dbReference type="DMDM" id="290457670"/>
<dbReference type="PaxDb" id="9606-ENSP00000365451"/>
<dbReference type="Antibodypedia" id="64084">
    <property type="antibodies" value="58 antibodies from 15 providers"/>
</dbReference>
<dbReference type="DNASU" id="26689"/>
<dbReference type="Ensembl" id="ENST00000268912.6">
    <property type="protein sequence ID" value="ENSP00000365451.3"/>
    <property type="gene ID" value="ENSG00000141194.7"/>
</dbReference>
<dbReference type="Ensembl" id="ENST00000641449.1">
    <property type="protein sequence ID" value="ENSP00000493234.1"/>
    <property type="gene ID" value="ENSG00000141194.7"/>
</dbReference>
<dbReference type="GeneID" id="26689"/>
<dbReference type="KEGG" id="hsa:26689"/>
<dbReference type="MANE-Select" id="ENST00000268912.6">
    <property type="protein sequence ID" value="ENSP00000365451.3"/>
    <property type="RefSeq nucleotide sequence ID" value="NM_001386095.1"/>
    <property type="RefSeq protein sequence ID" value="NP_001373024.1"/>
</dbReference>
<dbReference type="UCSC" id="uc010wno.3">
    <property type="organism name" value="human"/>
</dbReference>
<dbReference type="AGR" id="HGNC:8293"/>
<dbReference type="CTD" id="26689"/>
<dbReference type="DisGeNET" id="26689"/>
<dbReference type="GeneCards" id="OR4D1"/>
<dbReference type="HGNC" id="HGNC:8293">
    <property type="gene designation" value="OR4D1"/>
</dbReference>
<dbReference type="HPA" id="ENSG00000141194">
    <property type="expression patterns" value="Not detected"/>
</dbReference>
<dbReference type="neXtProt" id="NX_Q15615"/>
<dbReference type="OpenTargets" id="ENSG00000141194"/>
<dbReference type="PharmGKB" id="PA32267"/>
<dbReference type="VEuPathDB" id="HostDB:ENSG00000141194"/>
<dbReference type="eggNOG" id="ENOG502SIBY">
    <property type="taxonomic scope" value="Eukaryota"/>
</dbReference>
<dbReference type="GeneTree" id="ENSGT00940000154503"/>
<dbReference type="HOGENOM" id="CLU_012526_8_1_1"/>
<dbReference type="InParanoid" id="Q15615"/>
<dbReference type="OMA" id="CYSTVTC"/>
<dbReference type="OrthoDB" id="5970632at2759"/>
<dbReference type="PAN-GO" id="Q15615">
    <property type="GO annotations" value="2 GO annotations based on evolutionary models"/>
</dbReference>
<dbReference type="PhylomeDB" id="Q15615"/>
<dbReference type="TreeFam" id="TF338273"/>
<dbReference type="PathwayCommons" id="Q15615"/>
<dbReference type="Reactome" id="R-HSA-9752946">
    <property type="pathway name" value="Expression and translocation of olfactory receptors"/>
</dbReference>
<dbReference type="BioGRID-ORCS" id="26689">
    <property type="hits" value="14 hits in 743 CRISPR screens"/>
</dbReference>
<dbReference type="GeneWiki" id="OR4D1"/>
<dbReference type="GenomeRNAi" id="26689"/>
<dbReference type="Pharos" id="Q15615">
    <property type="development level" value="Tdark"/>
</dbReference>
<dbReference type="PRO" id="PR:Q15615"/>
<dbReference type="Proteomes" id="UP000005640">
    <property type="component" value="Chromosome 17"/>
</dbReference>
<dbReference type="RNAct" id="Q15615">
    <property type="molecule type" value="protein"/>
</dbReference>
<dbReference type="Bgee" id="ENSG00000141194">
    <property type="expression patterns" value="Expressed in granulocyte and 7 other cell types or tissues"/>
</dbReference>
<dbReference type="GO" id="GO:0016020">
    <property type="term" value="C:membrane"/>
    <property type="evidence" value="ECO:0000303"/>
    <property type="project" value="UniProtKB"/>
</dbReference>
<dbReference type="GO" id="GO:0005886">
    <property type="term" value="C:plasma membrane"/>
    <property type="evidence" value="ECO:0000318"/>
    <property type="project" value="GO_Central"/>
</dbReference>
<dbReference type="GO" id="GO:0004930">
    <property type="term" value="F:G protein-coupled receptor activity"/>
    <property type="evidence" value="ECO:0007669"/>
    <property type="project" value="UniProtKB-KW"/>
</dbReference>
<dbReference type="GO" id="GO:0004984">
    <property type="term" value="F:olfactory receptor activity"/>
    <property type="evidence" value="ECO:0000318"/>
    <property type="project" value="GO_Central"/>
</dbReference>
<dbReference type="GO" id="GO:0007608">
    <property type="term" value="P:sensory perception of smell"/>
    <property type="evidence" value="ECO:0000303"/>
    <property type="project" value="UniProtKB"/>
</dbReference>
<dbReference type="CDD" id="cd15936">
    <property type="entry name" value="7tmA_OR4D-like"/>
    <property type="match status" value="1"/>
</dbReference>
<dbReference type="FunFam" id="1.10.1220.70:FF:000001">
    <property type="entry name" value="Olfactory receptor"/>
    <property type="match status" value="1"/>
</dbReference>
<dbReference type="FunFam" id="1.20.1070.10:FF:000007">
    <property type="entry name" value="Olfactory receptor"/>
    <property type="match status" value="1"/>
</dbReference>
<dbReference type="Gene3D" id="1.20.1070.10">
    <property type="entry name" value="Rhodopsin 7-helix transmembrane proteins"/>
    <property type="match status" value="1"/>
</dbReference>
<dbReference type="InterPro" id="IPR000276">
    <property type="entry name" value="GPCR_Rhodpsn"/>
</dbReference>
<dbReference type="InterPro" id="IPR017452">
    <property type="entry name" value="GPCR_Rhodpsn_7TM"/>
</dbReference>
<dbReference type="InterPro" id="IPR000725">
    <property type="entry name" value="Olfact_rcpt"/>
</dbReference>
<dbReference type="InterPro" id="IPR050427">
    <property type="entry name" value="Olfactory_Receptors"/>
</dbReference>
<dbReference type="PANTHER" id="PTHR48002">
    <property type="entry name" value="OLFACTORY RECEPTOR"/>
    <property type="match status" value="1"/>
</dbReference>
<dbReference type="Pfam" id="PF13853">
    <property type="entry name" value="7tm_4"/>
    <property type="match status" value="1"/>
</dbReference>
<dbReference type="PRINTS" id="PR00237">
    <property type="entry name" value="GPCRRHODOPSN"/>
</dbReference>
<dbReference type="PRINTS" id="PR00245">
    <property type="entry name" value="OLFACTORYR"/>
</dbReference>
<dbReference type="SUPFAM" id="SSF81321">
    <property type="entry name" value="Family A G protein-coupled receptor-like"/>
    <property type="match status" value="1"/>
</dbReference>
<dbReference type="PROSITE" id="PS00237">
    <property type="entry name" value="G_PROTEIN_RECEP_F1_1"/>
    <property type="match status" value="1"/>
</dbReference>
<dbReference type="PROSITE" id="PS50262">
    <property type="entry name" value="G_PROTEIN_RECEP_F1_2"/>
    <property type="match status" value="1"/>
</dbReference>
<name>OR4D1_HUMAN</name>
<organism>
    <name type="scientific">Homo sapiens</name>
    <name type="common">Human</name>
    <dbReference type="NCBI Taxonomy" id="9606"/>
    <lineage>
        <taxon>Eukaryota</taxon>
        <taxon>Metazoa</taxon>
        <taxon>Chordata</taxon>
        <taxon>Craniata</taxon>
        <taxon>Vertebrata</taxon>
        <taxon>Euteleostomi</taxon>
        <taxon>Mammalia</taxon>
        <taxon>Eutheria</taxon>
        <taxon>Euarchontoglires</taxon>
        <taxon>Primates</taxon>
        <taxon>Haplorrhini</taxon>
        <taxon>Catarrhini</taxon>
        <taxon>Hominidae</taxon>
        <taxon>Homo</taxon>
    </lineage>
</organism>
<reference key="1">
    <citation type="submission" date="2001-07" db="EMBL/GenBank/DDBJ databases">
        <title>Genome-wide discovery and analysis of human seven transmembrane helix receptor genes.</title>
        <authorList>
            <person name="Suwa M."/>
            <person name="Sato T."/>
            <person name="Okouchi I."/>
            <person name="Arita M."/>
            <person name="Futami K."/>
            <person name="Matsumoto S."/>
            <person name="Tsutsumi S."/>
            <person name="Aburatani H."/>
            <person name="Asai K."/>
            <person name="Akiyama Y."/>
        </authorList>
    </citation>
    <scope>NUCLEOTIDE SEQUENCE [GENOMIC DNA]</scope>
</reference>
<reference key="2">
    <citation type="journal article" date="2006" name="Nature">
        <title>DNA sequence of human chromosome 17 and analysis of rearrangement in the human lineage.</title>
        <authorList>
            <person name="Zody M.C."/>
            <person name="Garber M."/>
            <person name="Adams D.J."/>
            <person name="Sharpe T."/>
            <person name="Harrow J."/>
            <person name="Lupski J.R."/>
            <person name="Nicholson C."/>
            <person name="Searle S.M."/>
            <person name="Wilming L."/>
            <person name="Young S.K."/>
            <person name="Abouelleil A."/>
            <person name="Allen N.R."/>
            <person name="Bi W."/>
            <person name="Bloom T."/>
            <person name="Borowsky M.L."/>
            <person name="Bugalter B.E."/>
            <person name="Butler J."/>
            <person name="Chang J.L."/>
            <person name="Chen C.-K."/>
            <person name="Cook A."/>
            <person name="Corum B."/>
            <person name="Cuomo C.A."/>
            <person name="de Jong P.J."/>
            <person name="DeCaprio D."/>
            <person name="Dewar K."/>
            <person name="FitzGerald M."/>
            <person name="Gilbert J."/>
            <person name="Gibson R."/>
            <person name="Gnerre S."/>
            <person name="Goldstein S."/>
            <person name="Grafham D.V."/>
            <person name="Grocock R."/>
            <person name="Hafez N."/>
            <person name="Hagopian D.S."/>
            <person name="Hart E."/>
            <person name="Norman C.H."/>
            <person name="Humphray S."/>
            <person name="Jaffe D.B."/>
            <person name="Jones M."/>
            <person name="Kamal M."/>
            <person name="Khodiyar V.K."/>
            <person name="LaButti K."/>
            <person name="Laird G."/>
            <person name="Lehoczky J."/>
            <person name="Liu X."/>
            <person name="Lokyitsang T."/>
            <person name="Loveland J."/>
            <person name="Lui A."/>
            <person name="Macdonald P."/>
            <person name="Major J.E."/>
            <person name="Matthews L."/>
            <person name="Mauceli E."/>
            <person name="McCarroll S.A."/>
            <person name="Mihalev A.H."/>
            <person name="Mudge J."/>
            <person name="Nguyen C."/>
            <person name="Nicol R."/>
            <person name="O'Leary S.B."/>
            <person name="Osoegawa K."/>
            <person name="Schwartz D.C."/>
            <person name="Shaw-Smith C."/>
            <person name="Stankiewicz P."/>
            <person name="Steward C."/>
            <person name="Swarbreck D."/>
            <person name="Venkataraman V."/>
            <person name="Whittaker C.A."/>
            <person name="Yang X."/>
            <person name="Zimmer A.R."/>
            <person name="Bradley A."/>
            <person name="Hubbard T."/>
            <person name="Birren B.W."/>
            <person name="Rogers J."/>
            <person name="Lander E.S."/>
            <person name="Nusbaum C."/>
        </authorList>
    </citation>
    <scope>NUCLEOTIDE SEQUENCE [LARGE SCALE GENOMIC DNA]</scope>
</reference>
<reference key="3">
    <citation type="submission" date="2005-09" db="EMBL/GenBank/DDBJ databases">
        <authorList>
            <person name="Mural R.J."/>
            <person name="Istrail S."/>
            <person name="Sutton G.G."/>
            <person name="Florea L."/>
            <person name="Halpern A.L."/>
            <person name="Mobarry C.M."/>
            <person name="Lippert R."/>
            <person name="Walenz B."/>
            <person name="Shatkay H."/>
            <person name="Dew I."/>
            <person name="Miller J.R."/>
            <person name="Flanigan M.J."/>
            <person name="Edwards N.J."/>
            <person name="Bolanos R."/>
            <person name="Fasulo D."/>
            <person name="Halldorsson B.V."/>
            <person name="Hannenhalli S."/>
            <person name="Turner R."/>
            <person name="Yooseph S."/>
            <person name="Lu F."/>
            <person name="Nusskern D.R."/>
            <person name="Shue B.C."/>
            <person name="Zheng X.H."/>
            <person name="Zhong F."/>
            <person name="Delcher A.L."/>
            <person name="Huson D.H."/>
            <person name="Kravitz S.A."/>
            <person name="Mouchard L."/>
            <person name="Reinert K."/>
            <person name="Remington K.A."/>
            <person name="Clark A.G."/>
            <person name="Waterman M.S."/>
            <person name="Eichler E.E."/>
            <person name="Adams M.D."/>
            <person name="Hunkapiller M.W."/>
            <person name="Myers E.W."/>
            <person name="Venter J.C."/>
        </authorList>
    </citation>
    <scope>NUCLEOTIDE SEQUENCE [LARGE SCALE GENOMIC DNA]</scope>
</reference>
<reference key="4">
    <citation type="journal article" date="2004" name="Genome Res.">
        <title>The status, quality, and expansion of the NIH full-length cDNA project: the Mammalian Gene Collection (MGC).</title>
        <authorList>
            <consortium name="The MGC Project Team"/>
        </authorList>
    </citation>
    <scope>NUCLEOTIDE SEQUENCE [LARGE SCALE MRNA]</scope>
    <source>
        <tissue>Testis</tissue>
    </source>
</reference>
<reference key="5">
    <citation type="journal article" date="2002" name="Genomics">
        <title>DEFOG: a practical scheme for deciphering families of genes.</title>
        <authorList>
            <person name="Fuchs T."/>
            <person name="Malecova B."/>
            <person name="Linhart C."/>
            <person name="Sharan R."/>
            <person name="Khen M."/>
            <person name="Herwig R."/>
            <person name="Shmulevich D."/>
            <person name="Elkon R."/>
            <person name="Steinfath M."/>
            <person name="O'Brien J.K."/>
            <person name="Radelof U."/>
            <person name="Lehrach H."/>
            <person name="Lancet D."/>
            <person name="Shamir R."/>
        </authorList>
    </citation>
    <scope>NUCLEOTIDE SEQUENCE [GENOMIC DNA] OF 68-280</scope>
    <scope>VARIANT ILE-174</scope>
</reference>
<reference key="6">
    <citation type="journal article" date="1997" name="Genomics">
        <title>Specific repertoire of olfactory receptor genes in the male germ cells of several mammalian species.</title>
        <authorList>
            <person name="Vanderhaeghen P."/>
            <person name="Schurmans S."/>
            <person name="Vassart G."/>
            <person name="Parmentier M."/>
        </authorList>
    </citation>
    <scope>NUCLEOTIDE SEQUENCE [MRNA] OF 126-279</scope>
    <scope>VARIANT ILE-174</scope>
    <source>
        <tissue>Testis</tissue>
    </source>
</reference>